<name>TF3A_LITPI</name>
<comment type="function">
    <text evidence="1 2 3">Involved in ribosomal large subunit biogenesis. Interacts with the internal control region (ICR) of approximately 50 bases within the 5S RNA genes, is required for correct transcription of these genes by RNA polymerase III. Also binds the transcribed 5S RNA's.</text>
</comment>
<comment type="subcellular location">
    <subcellularLocation>
        <location>Nucleus</location>
    </subcellularLocation>
</comment>
<reference key="1">
    <citation type="journal article" date="1992" name="Gene">
        <title>Comparison of the sequence and structure of transcription factor IIIA from Bufo americanus and Rana pipiens.</title>
        <authorList>
            <person name="Gaskins C.J."/>
            <person name="Smith J.F."/>
            <person name="Ogilvie M.K."/>
            <person name="Hanas J.S."/>
        </authorList>
    </citation>
    <scope>NUCLEOTIDE SEQUENCE [MRNA]</scope>
    <source>
        <tissue>Ovary</tissue>
    </source>
</reference>
<organism>
    <name type="scientific">Lithobates pipiens</name>
    <name type="common">Northern leopard frog</name>
    <name type="synonym">Rana pipiens</name>
    <dbReference type="NCBI Taxonomy" id="8404"/>
    <lineage>
        <taxon>Eukaryota</taxon>
        <taxon>Metazoa</taxon>
        <taxon>Chordata</taxon>
        <taxon>Craniata</taxon>
        <taxon>Vertebrata</taxon>
        <taxon>Euteleostomi</taxon>
        <taxon>Amphibia</taxon>
        <taxon>Batrachia</taxon>
        <taxon>Anura</taxon>
        <taxon>Neobatrachia</taxon>
        <taxon>Ranoidea</taxon>
        <taxon>Ranidae</taxon>
        <taxon>Lithobates</taxon>
    </lineage>
</organism>
<protein>
    <recommendedName>
        <fullName>Transcription factor IIIA</fullName>
        <shortName>TFIIIA</shortName>
    </recommendedName>
</protein>
<feature type="chain" id="PRO_0000047083" description="Transcription factor IIIA">
    <location>
        <begin position="1"/>
        <end position="335"/>
    </location>
</feature>
<feature type="zinc finger region" description="C2H2-type 1" evidence="4">
    <location>
        <begin position="13"/>
        <end position="37"/>
    </location>
</feature>
<feature type="zinc finger region" description="C2H2-type 2" evidence="4">
    <location>
        <begin position="43"/>
        <end position="67"/>
    </location>
</feature>
<feature type="zinc finger region" description="C2H2-type 3" evidence="4">
    <location>
        <begin position="73"/>
        <end position="98"/>
    </location>
</feature>
<feature type="zinc finger region" description="C2H2-type 4" evidence="4">
    <location>
        <begin position="105"/>
        <end position="129"/>
    </location>
</feature>
<feature type="zinc finger region" description="C2H2-type 5" evidence="4">
    <location>
        <begin position="135"/>
        <end position="159"/>
    </location>
</feature>
<feature type="zinc finger region" description="C2H2-type 6" evidence="4">
    <location>
        <begin position="162"/>
        <end position="188"/>
    </location>
</feature>
<feature type="zinc finger region" description="C2H2-type 7" evidence="4">
    <location>
        <begin position="192"/>
        <end position="214"/>
    </location>
</feature>
<feature type="zinc finger region" description="C2H2-type 8" evidence="4">
    <location>
        <begin position="221"/>
        <end position="246"/>
    </location>
</feature>
<feature type="zinc finger region" description="C2H2-type 9" evidence="4">
    <location>
        <begin position="252"/>
        <end position="276"/>
    </location>
</feature>
<feature type="region of interest" description="Disordered" evidence="5">
    <location>
        <begin position="269"/>
        <end position="335"/>
    </location>
</feature>
<feature type="compositionally biased region" description="Basic and acidic residues" evidence="5">
    <location>
        <begin position="269"/>
        <end position="280"/>
    </location>
</feature>
<feature type="compositionally biased region" description="Basic residues" evidence="5">
    <location>
        <begin position="281"/>
        <end position="292"/>
    </location>
</feature>
<sequence length="335" mass="38169">MGEKATPAVYKRYICSFADCSASYNKNWKLQAHLCKHTGERPFPCTVEGCGKGFVTLFHLTRHSMTHTGEKPCKCDAPDCDLSFTTMTNLRKHYQRAHLSPSLIYECYFADCGQTFKKHNQLKLHQYIHTNQQPFKCNHEGCDKSFSSPSRLKRHEKVHAGYPCQKDSSCSFVGKTWTEYMKHLAASHSEPTICDVCNRKFKNKTHLKDHKRTHEVERVVYKCPRDGCDRTYTKKFGLQSHILSFHEDSRPFACGHPGCGKTFAMKQSLDRHANTHDPEKKKMKKPRPKKSLASRLSGYNPKKLSKTPKSASELGKLPPDGPPDTATAMQNLSIK</sequence>
<gene>
    <name type="primary">gtf3a</name>
</gene>
<dbReference type="EMBL" id="M85211">
    <property type="protein sequence ID" value="AAA49534.1"/>
    <property type="molecule type" value="mRNA"/>
</dbReference>
<dbReference type="EMBL" id="X58369">
    <property type="protein sequence ID" value="CAA41260.1"/>
    <property type="molecule type" value="mRNA"/>
</dbReference>
<dbReference type="PIR" id="JC1441">
    <property type="entry name" value="JC1441"/>
</dbReference>
<dbReference type="SMR" id="P34695"/>
<dbReference type="GO" id="GO:0005634">
    <property type="term" value="C:nucleus"/>
    <property type="evidence" value="ECO:0007669"/>
    <property type="project" value="UniProtKB-SubCell"/>
</dbReference>
<dbReference type="GO" id="GO:0003677">
    <property type="term" value="F:DNA binding"/>
    <property type="evidence" value="ECO:0007669"/>
    <property type="project" value="UniProtKB-KW"/>
</dbReference>
<dbReference type="GO" id="GO:0003723">
    <property type="term" value="F:RNA binding"/>
    <property type="evidence" value="ECO:0007669"/>
    <property type="project" value="UniProtKB-KW"/>
</dbReference>
<dbReference type="GO" id="GO:0008270">
    <property type="term" value="F:zinc ion binding"/>
    <property type="evidence" value="ECO:0007669"/>
    <property type="project" value="UniProtKB-KW"/>
</dbReference>
<dbReference type="GO" id="GO:0042273">
    <property type="term" value="P:ribosomal large subunit biogenesis"/>
    <property type="evidence" value="ECO:0000250"/>
    <property type="project" value="UniProtKB"/>
</dbReference>
<dbReference type="FunFam" id="3.30.160.60:FF:001572">
    <property type="entry name" value="General transcription factor IIIA"/>
    <property type="match status" value="1"/>
</dbReference>
<dbReference type="FunFam" id="3.30.160.60:FF:000125">
    <property type="entry name" value="Putative zinc finger protein 143"/>
    <property type="match status" value="1"/>
</dbReference>
<dbReference type="FunFam" id="3.30.160.60:FF:001102">
    <property type="entry name" value="Transcription factor IIIA"/>
    <property type="match status" value="1"/>
</dbReference>
<dbReference type="FunFam" id="3.30.160.60:FF:001347">
    <property type="entry name" value="Transcription factor IIIA"/>
    <property type="match status" value="1"/>
</dbReference>
<dbReference type="FunFam" id="3.30.160.60:FF:001998">
    <property type="entry name" value="Transcription factor IIIA"/>
    <property type="match status" value="1"/>
</dbReference>
<dbReference type="FunFam" id="3.30.160.60:FF:001610">
    <property type="entry name" value="transcription factor IIIA"/>
    <property type="match status" value="1"/>
</dbReference>
<dbReference type="FunFam" id="3.30.160.60:FF:000446">
    <property type="entry name" value="Zinc finger protein"/>
    <property type="match status" value="1"/>
</dbReference>
<dbReference type="Gene3D" id="3.30.160.60">
    <property type="entry name" value="Classic Zinc Finger"/>
    <property type="match status" value="8"/>
</dbReference>
<dbReference type="InterPro" id="IPR054599">
    <property type="entry name" value="TFIIIA_Zfn-C2H2"/>
</dbReference>
<dbReference type="InterPro" id="IPR051061">
    <property type="entry name" value="Zinc_finger_trans_reg"/>
</dbReference>
<dbReference type="InterPro" id="IPR036236">
    <property type="entry name" value="Znf_C2H2_sf"/>
</dbReference>
<dbReference type="InterPro" id="IPR013087">
    <property type="entry name" value="Znf_C2H2_type"/>
</dbReference>
<dbReference type="PANTHER" id="PTHR46179:SF1">
    <property type="entry name" value="TRANSCRIPTION FACTOR IIIA"/>
    <property type="match status" value="1"/>
</dbReference>
<dbReference type="PANTHER" id="PTHR46179">
    <property type="entry name" value="ZINC FINGER PROTEIN"/>
    <property type="match status" value="1"/>
</dbReference>
<dbReference type="Pfam" id="PF22110">
    <property type="entry name" value="TFIIIA_zf-C2H2"/>
    <property type="match status" value="1"/>
</dbReference>
<dbReference type="Pfam" id="PF00096">
    <property type="entry name" value="zf-C2H2"/>
    <property type="match status" value="4"/>
</dbReference>
<dbReference type="Pfam" id="PF12874">
    <property type="entry name" value="zf-met"/>
    <property type="match status" value="1"/>
</dbReference>
<dbReference type="SMART" id="SM00355">
    <property type="entry name" value="ZnF_C2H2"/>
    <property type="match status" value="9"/>
</dbReference>
<dbReference type="SUPFAM" id="SSF57667">
    <property type="entry name" value="beta-beta-alpha zinc fingers"/>
    <property type="match status" value="6"/>
</dbReference>
<dbReference type="PROSITE" id="PS00028">
    <property type="entry name" value="ZINC_FINGER_C2H2_1"/>
    <property type="match status" value="8"/>
</dbReference>
<dbReference type="PROSITE" id="PS50157">
    <property type="entry name" value="ZINC_FINGER_C2H2_2"/>
    <property type="match status" value="8"/>
</dbReference>
<proteinExistence type="evidence at transcript level"/>
<accession>P34695</accession>
<keyword id="KW-0238">DNA-binding</keyword>
<keyword id="KW-0479">Metal-binding</keyword>
<keyword id="KW-0539">Nucleus</keyword>
<keyword id="KW-0677">Repeat</keyword>
<keyword id="KW-0690">Ribosome biogenesis</keyword>
<keyword id="KW-0694">RNA-binding</keyword>
<keyword id="KW-0804">Transcription</keyword>
<keyword id="KW-0805">Transcription regulation</keyword>
<keyword id="KW-0862">Zinc</keyword>
<keyword id="KW-0863">Zinc-finger</keyword>
<evidence type="ECO:0000250" key="1">
    <source>
        <dbReference type="UniProtKB" id="P03001"/>
    </source>
</evidence>
<evidence type="ECO:0000250" key="2">
    <source>
        <dbReference type="UniProtKB" id="P17842"/>
    </source>
</evidence>
<evidence type="ECO:0000250" key="3">
    <source>
        <dbReference type="UniProtKB" id="Q92664"/>
    </source>
</evidence>
<evidence type="ECO:0000255" key="4">
    <source>
        <dbReference type="PROSITE-ProRule" id="PRU00042"/>
    </source>
</evidence>
<evidence type="ECO:0000256" key="5">
    <source>
        <dbReference type="SAM" id="MobiDB-lite"/>
    </source>
</evidence>